<evidence type="ECO:0000250" key="1"/>
<evidence type="ECO:0000250" key="2">
    <source>
        <dbReference type="UniProtKB" id="P12113"/>
    </source>
</evidence>
<evidence type="ECO:0000269" key="3">
    <source>
    </source>
</evidence>
<evidence type="ECO:0000305" key="4"/>
<evidence type="ECO:0007744" key="5">
    <source>
    </source>
</evidence>
<sequence>MACSNLTTMWVSSKPSLSADSSSLSFRSVLKCPTNTSSPPSRASSVSPLQASLRELRDRIDSVKNTQKITEAMKLVAAAKVRRAQEAVVNGRPFSETLVEVLYNINEQLQTDDVDVPLTKVRPVKKVALVVVTGDRGLCGGFNNFIIKKAEARIKELKGLGLEYTVISVGKKGNSYFLRRPYIPVDKYLEAGTLPTAKEAQAVADDVFSLFISEEVDKVELLYTKFVSLVKSEPVIHTLLPLSPKGEICDINGTCVDAAEDEFFRLTTKEGKLTVERETFRTPTADFSPILQFEQDPVQILDALLPLYLNSQILRALQESLASELAARMSAMSSASDNASDLKKSLSMVYNRKRQAKITGEILEIVAGANAQV</sequence>
<gene>
    <name type="primary">ATPC1</name>
    <name type="ordered locus">At4g04640</name>
    <name type="ORF">T19J18.4</name>
</gene>
<name>ATPG1_ARATH</name>
<dbReference type="EMBL" id="M61741">
    <property type="protein sequence ID" value="AAA32753.1"/>
    <property type="molecule type" value="Genomic_DNA"/>
</dbReference>
<dbReference type="EMBL" id="AF149414">
    <property type="protein sequence ID" value="AAD48955.1"/>
    <property type="molecule type" value="Genomic_DNA"/>
</dbReference>
<dbReference type="EMBL" id="AL161501">
    <property type="protein sequence ID" value="CAB80829.1"/>
    <property type="molecule type" value="Genomic_DNA"/>
</dbReference>
<dbReference type="EMBL" id="CP002687">
    <property type="protein sequence ID" value="AEE82408.1"/>
    <property type="molecule type" value="Genomic_DNA"/>
</dbReference>
<dbReference type="EMBL" id="AF428422">
    <property type="protein sequence ID" value="AAL16191.1"/>
    <property type="molecule type" value="mRNA"/>
</dbReference>
<dbReference type="EMBL" id="AY065199">
    <property type="protein sequence ID" value="AAL38375.1"/>
    <property type="molecule type" value="mRNA"/>
</dbReference>
<dbReference type="EMBL" id="AY081505">
    <property type="protein sequence ID" value="AAM10067.1"/>
    <property type="molecule type" value="mRNA"/>
</dbReference>
<dbReference type="EMBL" id="AY088438">
    <property type="protein sequence ID" value="AAM65974.1"/>
    <property type="molecule type" value="mRNA"/>
</dbReference>
<dbReference type="PIR" id="B39732">
    <property type="entry name" value="B39732"/>
</dbReference>
<dbReference type="RefSeq" id="NP_567265.1">
    <property type="nucleotide sequence ID" value="NM_116702.2"/>
</dbReference>
<dbReference type="SMR" id="Q01908"/>
<dbReference type="BioGRID" id="11108">
    <property type="interactions" value="9"/>
</dbReference>
<dbReference type="FunCoup" id="Q01908">
    <property type="interactions" value="1177"/>
</dbReference>
<dbReference type="IntAct" id="Q01908">
    <property type="interactions" value="2"/>
</dbReference>
<dbReference type="MINT" id="Q01908"/>
<dbReference type="STRING" id="3702.Q01908"/>
<dbReference type="iPTMnet" id="Q01908"/>
<dbReference type="MetOSite" id="Q01908"/>
<dbReference type="PaxDb" id="3702-AT4G04640.1"/>
<dbReference type="ProteomicsDB" id="241134"/>
<dbReference type="EnsemblPlants" id="AT4G04640.1">
    <property type="protein sequence ID" value="AT4G04640.1"/>
    <property type="gene ID" value="AT4G04640"/>
</dbReference>
<dbReference type="GeneID" id="825797"/>
<dbReference type="Gramene" id="AT4G04640.1">
    <property type="protein sequence ID" value="AT4G04640.1"/>
    <property type="gene ID" value="AT4G04640"/>
</dbReference>
<dbReference type="KEGG" id="ath:AT4G04640"/>
<dbReference type="Araport" id="AT4G04640"/>
<dbReference type="TAIR" id="AT4G04640">
    <property type="gene designation" value="ATPC1"/>
</dbReference>
<dbReference type="eggNOG" id="KOG1531">
    <property type="taxonomic scope" value="Eukaryota"/>
</dbReference>
<dbReference type="HOGENOM" id="CLU_050669_0_0_1"/>
<dbReference type="InParanoid" id="Q01908"/>
<dbReference type="OMA" id="VMQFEQD"/>
<dbReference type="OrthoDB" id="1601070at2759"/>
<dbReference type="PhylomeDB" id="Q01908"/>
<dbReference type="BioCyc" id="ARA:AT4G04640-MONOMER"/>
<dbReference type="CD-CODE" id="4299E36E">
    <property type="entry name" value="Nucleolus"/>
</dbReference>
<dbReference type="PRO" id="PR:Q01908"/>
<dbReference type="Proteomes" id="UP000006548">
    <property type="component" value="Chromosome 4"/>
</dbReference>
<dbReference type="ExpressionAtlas" id="Q01908">
    <property type="expression patterns" value="baseline and differential"/>
</dbReference>
<dbReference type="GO" id="GO:0009507">
    <property type="term" value="C:chloroplast"/>
    <property type="evidence" value="ECO:0000314"/>
    <property type="project" value="TAIR"/>
</dbReference>
<dbReference type="GO" id="GO:0009941">
    <property type="term" value="C:chloroplast envelope"/>
    <property type="evidence" value="ECO:0007005"/>
    <property type="project" value="TAIR"/>
</dbReference>
<dbReference type="GO" id="GO:0009534">
    <property type="term" value="C:chloroplast thylakoid"/>
    <property type="evidence" value="ECO:0007005"/>
    <property type="project" value="TAIR"/>
</dbReference>
<dbReference type="GO" id="GO:0009535">
    <property type="term" value="C:chloroplast thylakoid membrane"/>
    <property type="evidence" value="ECO:0007005"/>
    <property type="project" value="TAIR"/>
</dbReference>
<dbReference type="GO" id="GO:0005829">
    <property type="term" value="C:cytosol"/>
    <property type="evidence" value="ECO:0007005"/>
    <property type="project" value="TAIR"/>
</dbReference>
<dbReference type="GO" id="GO:0045259">
    <property type="term" value="C:proton-transporting ATP synthase complex"/>
    <property type="evidence" value="ECO:0007669"/>
    <property type="project" value="UniProtKB-KW"/>
</dbReference>
<dbReference type="GO" id="GO:0009579">
    <property type="term" value="C:thylakoid"/>
    <property type="evidence" value="ECO:0007005"/>
    <property type="project" value="TAIR"/>
</dbReference>
<dbReference type="GO" id="GO:0030234">
    <property type="term" value="F:enzyme regulator activity"/>
    <property type="evidence" value="ECO:0000304"/>
    <property type="project" value="TAIR"/>
</dbReference>
<dbReference type="GO" id="GO:0046933">
    <property type="term" value="F:proton-transporting ATP synthase activity, rotational mechanism"/>
    <property type="evidence" value="ECO:0007669"/>
    <property type="project" value="InterPro"/>
</dbReference>
<dbReference type="GO" id="GO:0006754">
    <property type="term" value="P:ATP biosynthetic process"/>
    <property type="evidence" value="ECO:0000315"/>
    <property type="project" value="TAIR"/>
</dbReference>
<dbReference type="GO" id="GO:0009772">
    <property type="term" value="P:photosynthetic electron transport in photosystem II"/>
    <property type="evidence" value="ECO:0000315"/>
    <property type="project" value="TAIR"/>
</dbReference>
<dbReference type="GO" id="GO:0015986">
    <property type="term" value="P:proton motive force-driven ATP synthesis"/>
    <property type="evidence" value="ECO:0000304"/>
    <property type="project" value="TAIR"/>
</dbReference>
<dbReference type="CDD" id="cd12151">
    <property type="entry name" value="F1-ATPase_gamma"/>
    <property type="match status" value="1"/>
</dbReference>
<dbReference type="FunFam" id="1.10.287.80:FF:000003">
    <property type="entry name" value="ATP synthase gamma chain, chloroplastic"/>
    <property type="match status" value="1"/>
</dbReference>
<dbReference type="FunFam" id="1.10.287.80:FF:000004">
    <property type="entry name" value="ATP synthase gamma chain, chloroplastic"/>
    <property type="match status" value="1"/>
</dbReference>
<dbReference type="FunFam" id="3.40.1380.10:FF:000004">
    <property type="entry name" value="ATP synthase gamma chain, chloroplastic"/>
    <property type="match status" value="1"/>
</dbReference>
<dbReference type="Gene3D" id="3.40.1380.10">
    <property type="match status" value="1"/>
</dbReference>
<dbReference type="Gene3D" id="1.10.287.80">
    <property type="entry name" value="ATP synthase, gamma subunit, helix hairpin domain"/>
    <property type="match status" value="2"/>
</dbReference>
<dbReference type="HAMAP" id="MF_00815">
    <property type="entry name" value="ATP_synth_gamma_bact"/>
    <property type="match status" value="1"/>
</dbReference>
<dbReference type="InterPro" id="IPR035968">
    <property type="entry name" value="ATP_synth_F1_ATPase_gsu"/>
</dbReference>
<dbReference type="InterPro" id="IPR000131">
    <property type="entry name" value="ATP_synth_F1_gsu"/>
</dbReference>
<dbReference type="InterPro" id="IPR023632">
    <property type="entry name" value="ATP_synth_F1_gsu_CS"/>
</dbReference>
<dbReference type="NCBIfam" id="TIGR01146">
    <property type="entry name" value="ATPsyn_F1gamma"/>
    <property type="match status" value="1"/>
</dbReference>
<dbReference type="NCBIfam" id="NF004145">
    <property type="entry name" value="PRK05621.1-2"/>
    <property type="match status" value="1"/>
</dbReference>
<dbReference type="PANTHER" id="PTHR11693">
    <property type="entry name" value="ATP SYNTHASE GAMMA CHAIN"/>
    <property type="match status" value="1"/>
</dbReference>
<dbReference type="PANTHER" id="PTHR11693:SF42">
    <property type="entry name" value="ATP SYNTHASE GAMMA CHAIN 1, CHLOROPLASTIC"/>
    <property type="match status" value="1"/>
</dbReference>
<dbReference type="Pfam" id="PF00231">
    <property type="entry name" value="ATP-synt"/>
    <property type="match status" value="1"/>
</dbReference>
<dbReference type="PRINTS" id="PR00126">
    <property type="entry name" value="ATPASEGAMMA"/>
</dbReference>
<dbReference type="SUPFAM" id="SSF52943">
    <property type="entry name" value="ATP synthase (F1-ATPase), gamma subunit"/>
    <property type="match status" value="1"/>
</dbReference>
<dbReference type="PROSITE" id="PS00153">
    <property type="entry name" value="ATPASE_GAMMA"/>
    <property type="match status" value="1"/>
</dbReference>
<organism>
    <name type="scientific">Arabidopsis thaliana</name>
    <name type="common">Mouse-ear cress</name>
    <dbReference type="NCBI Taxonomy" id="3702"/>
    <lineage>
        <taxon>Eukaryota</taxon>
        <taxon>Viridiplantae</taxon>
        <taxon>Streptophyta</taxon>
        <taxon>Embryophyta</taxon>
        <taxon>Tracheophyta</taxon>
        <taxon>Spermatophyta</taxon>
        <taxon>Magnoliopsida</taxon>
        <taxon>eudicotyledons</taxon>
        <taxon>Gunneridae</taxon>
        <taxon>Pentapetalae</taxon>
        <taxon>rosids</taxon>
        <taxon>malvids</taxon>
        <taxon>Brassicales</taxon>
        <taxon>Brassicaceae</taxon>
        <taxon>Camelineae</taxon>
        <taxon>Arabidopsis</taxon>
    </lineage>
</organism>
<proteinExistence type="evidence at protein level"/>
<comment type="function">
    <text>Produces ATP from ADP in the presence of a proton gradient across the membrane. The gamma chain is believed to be important in regulating ATPase activity and the flow of protons through the CF(0) complex.</text>
</comment>
<comment type="subunit">
    <text evidence="2 3">F-type ATPases have 2 components, CF(1) - the catalytic core - and CF(0) - the membrane proton channel. CF(1) has five subunits: alpha(3), beta(3), gamma(1), delta(1), epsilon(1). CF(0) has four main subunits: a, b, b' and c (By similarity). Interacts with PAB (PubMed:25775508).</text>
</comment>
<comment type="subcellular location">
    <subcellularLocation>
        <location evidence="1">Plastid</location>
        <location evidence="1">Chloroplast thylakoid membrane</location>
        <topology evidence="1">Peripheral membrane protein</topology>
    </subcellularLocation>
</comment>
<comment type="induction">
    <text>By light.</text>
</comment>
<comment type="similarity">
    <text evidence="4">Belongs to the ATPase gamma chain family.</text>
</comment>
<accession>Q01908</accession>
<reference key="1">
    <citation type="journal article" date="1991" name="J. Biol. Chem.">
        <title>Two genes, atpC1 and atpC2, for the gamma subunit of Arabidopsis thaliana chloroplast ATP synthase.</title>
        <authorList>
            <person name="Inohara N."/>
            <person name="Iwamoto A."/>
            <person name="Moriyama Y."/>
            <person name="Shimomura S."/>
            <person name="Maeda M."/>
            <person name="Futai M."/>
        </authorList>
    </citation>
    <scope>NUCLEOTIDE SEQUENCE [GENOMIC DNA]</scope>
</reference>
<reference key="2">
    <citation type="journal article" date="1999" name="Nature">
        <title>Sequence and analysis of chromosome 4 of the plant Arabidopsis thaliana.</title>
        <authorList>
            <person name="Mayer K.F.X."/>
            <person name="Schueller C."/>
            <person name="Wambutt R."/>
            <person name="Murphy G."/>
            <person name="Volckaert G."/>
            <person name="Pohl T."/>
            <person name="Duesterhoeft A."/>
            <person name="Stiekema W."/>
            <person name="Entian K.-D."/>
            <person name="Terryn N."/>
            <person name="Harris B."/>
            <person name="Ansorge W."/>
            <person name="Brandt P."/>
            <person name="Grivell L.A."/>
            <person name="Rieger M."/>
            <person name="Weichselgartner M."/>
            <person name="de Simone V."/>
            <person name="Obermaier B."/>
            <person name="Mache R."/>
            <person name="Mueller M."/>
            <person name="Kreis M."/>
            <person name="Delseny M."/>
            <person name="Puigdomenech P."/>
            <person name="Watson M."/>
            <person name="Schmidtheini T."/>
            <person name="Reichert B."/>
            <person name="Portetelle D."/>
            <person name="Perez-Alonso M."/>
            <person name="Boutry M."/>
            <person name="Bancroft I."/>
            <person name="Vos P."/>
            <person name="Hoheisel J."/>
            <person name="Zimmermann W."/>
            <person name="Wedler H."/>
            <person name="Ridley P."/>
            <person name="Langham S.-A."/>
            <person name="McCullagh B."/>
            <person name="Bilham L."/>
            <person name="Robben J."/>
            <person name="van der Schueren J."/>
            <person name="Grymonprez B."/>
            <person name="Chuang Y.-J."/>
            <person name="Vandenbussche F."/>
            <person name="Braeken M."/>
            <person name="Weltjens I."/>
            <person name="Voet M."/>
            <person name="Bastiaens I."/>
            <person name="Aert R."/>
            <person name="Defoor E."/>
            <person name="Weitzenegger T."/>
            <person name="Bothe G."/>
            <person name="Ramsperger U."/>
            <person name="Hilbert H."/>
            <person name="Braun M."/>
            <person name="Holzer E."/>
            <person name="Brandt A."/>
            <person name="Peters S."/>
            <person name="van Staveren M."/>
            <person name="Dirkse W."/>
            <person name="Mooijman P."/>
            <person name="Klein Lankhorst R."/>
            <person name="Rose M."/>
            <person name="Hauf J."/>
            <person name="Koetter P."/>
            <person name="Berneiser S."/>
            <person name="Hempel S."/>
            <person name="Feldpausch M."/>
            <person name="Lamberth S."/>
            <person name="Van den Daele H."/>
            <person name="De Keyser A."/>
            <person name="Buysshaert C."/>
            <person name="Gielen J."/>
            <person name="Villarroel R."/>
            <person name="De Clercq R."/>
            <person name="van Montagu M."/>
            <person name="Rogers J."/>
            <person name="Cronin A."/>
            <person name="Quail M.A."/>
            <person name="Bray-Allen S."/>
            <person name="Clark L."/>
            <person name="Doggett J."/>
            <person name="Hall S."/>
            <person name="Kay M."/>
            <person name="Lennard N."/>
            <person name="McLay K."/>
            <person name="Mayes R."/>
            <person name="Pettett A."/>
            <person name="Rajandream M.A."/>
            <person name="Lyne M."/>
            <person name="Benes V."/>
            <person name="Rechmann S."/>
            <person name="Borkova D."/>
            <person name="Bloecker H."/>
            <person name="Scharfe M."/>
            <person name="Grimm M."/>
            <person name="Loehnert T.-H."/>
            <person name="Dose S."/>
            <person name="de Haan M."/>
            <person name="Maarse A.C."/>
            <person name="Schaefer M."/>
            <person name="Mueller-Auer S."/>
            <person name="Gabel C."/>
            <person name="Fuchs M."/>
            <person name="Fartmann B."/>
            <person name="Granderath K."/>
            <person name="Dauner D."/>
            <person name="Herzl A."/>
            <person name="Neumann S."/>
            <person name="Argiriou A."/>
            <person name="Vitale D."/>
            <person name="Liguori R."/>
            <person name="Piravandi E."/>
            <person name="Massenet O."/>
            <person name="Quigley F."/>
            <person name="Clabauld G."/>
            <person name="Muendlein A."/>
            <person name="Felber R."/>
            <person name="Schnabl S."/>
            <person name="Hiller R."/>
            <person name="Schmidt W."/>
            <person name="Lecharny A."/>
            <person name="Aubourg S."/>
            <person name="Chefdor F."/>
            <person name="Cooke R."/>
            <person name="Berger C."/>
            <person name="Monfort A."/>
            <person name="Casacuberta E."/>
            <person name="Gibbons T."/>
            <person name="Weber N."/>
            <person name="Vandenbol M."/>
            <person name="Bargues M."/>
            <person name="Terol J."/>
            <person name="Torres A."/>
            <person name="Perez-Perez A."/>
            <person name="Purnelle B."/>
            <person name="Bent E."/>
            <person name="Johnson S."/>
            <person name="Tacon D."/>
            <person name="Jesse T."/>
            <person name="Heijnen L."/>
            <person name="Schwarz S."/>
            <person name="Scholler P."/>
            <person name="Heber S."/>
            <person name="Francs P."/>
            <person name="Bielke C."/>
            <person name="Frishman D."/>
            <person name="Haase D."/>
            <person name="Lemcke K."/>
            <person name="Mewes H.-W."/>
            <person name="Stocker S."/>
            <person name="Zaccaria P."/>
            <person name="Bevan M."/>
            <person name="Wilson R.K."/>
            <person name="de la Bastide M."/>
            <person name="Habermann K."/>
            <person name="Parnell L."/>
            <person name="Dedhia N."/>
            <person name="Gnoj L."/>
            <person name="Schutz K."/>
            <person name="Huang E."/>
            <person name="Spiegel L."/>
            <person name="Sekhon M."/>
            <person name="Murray J."/>
            <person name="Sheet P."/>
            <person name="Cordes M."/>
            <person name="Abu-Threideh J."/>
            <person name="Stoneking T."/>
            <person name="Kalicki J."/>
            <person name="Graves T."/>
            <person name="Harmon G."/>
            <person name="Edwards J."/>
            <person name="Latreille P."/>
            <person name="Courtney L."/>
            <person name="Cloud J."/>
            <person name="Abbott A."/>
            <person name="Scott K."/>
            <person name="Johnson D."/>
            <person name="Minx P."/>
            <person name="Bentley D."/>
            <person name="Fulton B."/>
            <person name="Miller N."/>
            <person name="Greco T."/>
            <person name="Kemp K."/>
            <person name="Kramer J."/>
            <person name="Fulton L."/>
            <person name="Mardis E."/>
            <person name="Dante M."/>
            <person name="Pepin K."/>
            <person name="Hillier L.W."/>
            <person name="Nelson J."/>
            <person name="Spieth J."/>
            <person name="Ryan E."/>
            <person name="Andrews S."/>
            <person name="Geisel C."/>
            <person name="Layman D."/>
            <person name="Du H."/>
            <person name="Ali J."/>
            <person name="Berghoff A."/>
            <person name="Jones K."/>
            <person name="Drone K."/>
            <person name="Cotton M."/>
            <person name="Joshu C."/>
            <person name="Antonoiu B."/>
            <person name="Zidanic M."/>
            <person name="Strong C."/>
            <person name="Sun H."/>
            <person name="Lamar B."/>
            <person name="Yordan C."/>
            <person name="Ma P."/>
            <person name="Zhong J."/>
            <person name="Preston R."/>
            <person name="Vil D."/>
            <person name="Shekher M."/>
            <person name="Matero A."/>
            <person name="Shah R."/>
            <person name="Swaby I.K."/>
            <person name="O'Shaughnessy A."/>
            <person name="Rodriguez M."/>
            <person name="Hoffman J."/>
            <person name="Till S."/>
            <person name="Granat S."/>
            <person name="Shohdy N."/>
            <person name="Hasegawa A."/>
            <person name="Hameed A."/>
            <person name="Lodhi M."/>
            <person name="Johnson A."/>
            <person name="Chen E."/>
            <person name="Marra M.A."/>
            <person name="Martienssen R."/>
            <person name="McCombie W.R."/>
        </authorList>
    </citation>
    <scope>NUCLEOTIDE SEQUENCE [LARGE SCALE GENOMIC DNA]</scope>
    <source>
        <strain>cv. Columbia</strain>
    </source>
</reference>
<reference key="3">
    <citation type="journal article" date="2017" name="Plant J.">
        <title>Araport11: a complete reannotation of the Arabidopsis thaliana reference genome.</title>
        <authorList>
            <person name="Cheng C.Y."/>
            <person name="Krishnakumar V."/>
            <person name="Chan A.P."/>
            <person name="Thibaud-Nissen F."/>
            <person name="Schobel S."/>
            <person name="Town C.D."/>
        </authorList>
    </citation>
    <scope>GENOME REANNOTATION</scope>
    <source>
        <strain>cv. Columbia</strain>
    </source>
</reference>
<reference key="4">
    <citation type="journal article" date="2003" name="Science">
        <title>Empirical analysis of transcriptional activity in the Arabidopsis genome.</title>
        <authorList>
            <person name="Yamada K."/>
            <person name="Lim J."/>
            <person name="Dale J.M."/>
            <person name="Chen H."/>
            <person name="Shinn P."/>
            <person name="Palm C.J."/>
            <person name="Southwick A.M."/>
            <person name="Wu H.C."/>
            <person name="Kim C.J."/>
            <person name="Nguyen M."/>
            <person name="Pham P.K."/>
            <person name="Cheuk R.F."/>
            <person name="Karlin-Newmann G."/>
            <person name="Liu S.X."/>
            <person name="Lam B."/>
            <person name="Sakano H."/>
            <person name="Wu T."/>
            <person name="Yu G."/>
            <person name="Miranda M."/>
            <person name="Quach H.L."/>
            <person name="Tripp M."/>
            <person name="Chang C.H."/>
            <person name="Lee J.M."/>
            <person name="Toriumi M.J."/>
            <person name="Chan M.M."/>
            <person name="Tang C.C."/>
            <person name="Onodera C.S."/>
            <person name="Deng J.M."/>
            <person name="Akiyama K."/>
            <person name="Ansari Y."/>
            <person name="Arakawa T."/>
            <person name="Banh J."/>
            <person name="Banno F."/>
            <person name="Bowser L."/>
            <person name="Brooks S.Y."/>
            <person name="Carninci P."/>
            <person name="Chao Q."/>
            <person name="Choy N."/>
            <person name="Enju A."/>
            <person name="Goldsmith A.D."/>
            <person name="Gurjal M."/>
            <person name="Hansen N.F."/>
            <person name="Hayashizaki Y."/>
            <person name="Johnson-Hopson C."/>
            <person name="Hsuan V.W."/>
            <person name="Iida K."/>
            <person name="Karnes M."/>
            <person name="Khan S."/>
            <person name="Koesema E."/>
            <person name="Ishida J."/>
            <person name="Jiang P.X."/>
            <person name="Jones T."/>
            <person name="Kawai J."/>
            <person name="Kamiya A."/>
            <person name="Meyers C."/>
            <person name="Nakajima M."/>
            <person name="Narusaka M."/>
            <person name="Seki M."/>
            <person name="Sakurai T."/>
            <person name="Satou M."/>
            <person name="Tamse R."/>
            <person name="Vaysberg M."/>
            <person name="Wallender E.K."/>
            <person name="Wong C."/>
            <person name="Yamamura Y."/>
            <person name="Yuan S."/>
            <person name="Shinozaki K."/>
            <person name="Davis R.W."/>
            <person name="Theologis A."/>
            <person name="Ecker J.R."/>
        </authorList>
    </citation>
    <scope>NUCLEOTIDE SEQUENCE [LARGE SCALE MRNA]</scope>
    <source>
        <strain>cv. Columbia</strain>
    </source>
</reference>
<reference key="5">
    <citation type="submission" date="2002-03" db="EMBL/GenBank/DDBJ databases">
        <title>Full-length cDNA from Arabidopsis thaliana.</title>
        <authorList>
            <person name="Brover V.V."/>
            <person name="Troukhan M.E."/>
            <person name="Alexandrov N.A."/>
            <person name="Lu Y.-P."/>
            <person name="Flavell R.B."/>
            <person name="Feldmann K.A."/>
        </authorList>
    </citation>
    <scope>NUCLEOTIDE SEQUENCE [LARGE SCALE MRNA]</scope>
</reference>
<reference key="6">
    <citation type="journal article" date="2009" name="Plant Physiol.">
        <title>Large-scale Arabidopsis phosphoproteome profiling reveals novel chloroplast kinase substrates and phosphorylation networks.</title>
        <authorList>
            <person name="Reiland S."/>
            <person name="Messerli G."/>
            <person name="Baerenfaller K."/>
            <person name="Gerrits B."/>
            <person name="Endler A."/>
            <person name="Grossmann J."/>
            <person name="Gruissem W."/>
            <person name="Baginsky S."/>
        </authorList>
    </citation>
    <scope>PHOSPHORYLATION [LARGE SCALE ANALYSIS] AT SER-347</scope>
    <scope>IDENTIFICATION BY MASS SPECTROMETRY [LARGE SCALE ANALYSIS]</scope>
</reference>
<reference key="7">
    <citation type="journal article" date="2015" name="Proc. Natl. Acad. Sci. U.S.A.">
        <title>PAB is an assembly chaperone that functions downstream of chaperonin 60 in the assembly of chloroplast ATP synthase coupling factor 1.</title>
        <authorList>
            <person name="Mao J."/>
            <person name="Chi W."/>
            <person name="Ouyang M."/>
            <person name="He B."/>
            <person name="Chen F."/>
            <person name="Zhang L."/>
        </authorList>
    </citation>
    <scope>INTERACTION WITH PAB</scope>
</reference>
<keyword id="KW-0066">ATP synthesis</keyword>
<keyword id="KW-0139">CF(1)</keyword>
<keyword id="KW-0150">Chloroplast</keyword>
<keyword id="KW-1015">Disulfide bond</keyword>
<keyword id="KW-0375">Hydrogen ion transport</keyword>
<keyword id="KW-0406">Ion transport</keyword>
<keyword id="KW-0472">Membrane</keyword>
<keyword id="KW-0597">Phosphoprotein</keyword>
<keyword id="KW-0934">Plastid</keyword>
<keyword id="KW-1185">Reference proteome</keyword>
<keyword id="KW-0793">Thylakoid</keyword>
<keyword id="KW-0809">Transit peptide</keyword>
<keyword id="KW-0813">Transport</keyword>
<protein>
    <recommendedName>
        <fullName>ATP synthase gamma chain 1, chloroplastic</fullName>
    </recommendedName>
    <alternativeName>
        <fullName>F-ATPase gamma subunit 1</fullName>
    </alternativeName>
</protein>
<feature type="transit peptide" description="Chloroplast" evidence="1">
    <location>
        <begin position="1"/>
        <end position="50"/>
    </location>
</feature>
<feature type="chain" id="PRO_0000002674" description="ATP synthase gamma chain 1, chloroplastic">
    <location>
        <begin position="51"/>
        <end position="373"/>
    </location>
</feature>
<feature type="active site" evidence="1">
    <location>
        <position position="139"/>
    </location>
</feature>
<feature type="modified residue" description="Phosphoserine" evidence="5">
    <location>
        <position position="347"/>
    </location>
</feature>
<feature type="disulfide bond" evidence="1">
    <location>
        <begin position="249"/>
        <end position="255"/>
    </location>
</feature>